<protein>
    <recommendedName>
        <fullName evidence="1">GTPase Der</fullName>
    </recommendedName>
    <alternativeName>
        <fullName evidence="1">GTP-binding protein EngA</fullName>
    </alternativeName>
</protein>
<feature type="chain" id="PRO_1000124377" description="GTPase Der">
    <location>
        <begin position="1"/>
        <end position="436"/>
    </location>
</feature>
<feature type="domain" description="EngA-type G 1">
    <location>
        <begin position="4"/>
        <end position="167"/>
    </location>
</feature>
<feature type="domain" description="EngA-type G 2">
    <location>
        <begin position="175"/>
        <end position="351"/>
    </location>
</feature>
<feature type="domain" description="KH-like" evidence="1">
    <location>
        <begin position="352"/>
        <end position="436"/>
    </location>
</feature>
<feature type="binding site" evidence="1">
    <location>
        <begin position="10"/>
        <end position="17"/>
    </location>
    <ligand>
        <name>GTP</name>
        <dbReference type="ChEBI" id="CHEBI:37565"/>
        <label>1</label>
    </ligand>
</feature>
<feature type="binding site" evidence="1">
    <location>
        <begin position="57"/>
        <end position="61"/>
    </location>
    <ligand>
        <name>GTP</name>
        <dbReference type="ChEBI" id="CHEBI:37565"/>
        <label>1</label>
    </ligand>
</feature>
<feature type="binding site" evidence="1">
    <location>
        <begin position="119"/>
        <end position="122"/>
    </location>
    <ligand>
        <name>GTP</name>
        <dbReference type="ChEBI" id="CHEBI:37565"/>
        <label>1</label>
    </ligand>
</feature>
<feature type="binding site" evidence="1">
    <location>
        <begin position="181"/>
        <end position="188"/>
    </location>
    <ligand>
        <name>GTP</name>
        <dbReference type="ChEBI" id="CHEBI:37565"/>
        <label>2</label>
    </ligand>
</feature>
<feature type="binding site" evidence="1">
    <location>
        <begin position="229"/>
        <end position="233"/>
    </location>
    <ligand>
        <name>GTP</name>
        <dbReference type="ChEBI" id="CHEBI:37565"/>
        <label>2</label>
    </ligand>
</feature>
<feature type="binding site" evidence="1">
    <location>
        <begin position="294"/>
        <end position="297"/>
    </location>
    <ligand>
        <name>GTP</name>
        <dbReference type="ChEBI" id="CHEBI:37565"/>
        <label>2</label>
    </ligand>
</feature>
<gene>
    <name evidence="1" type="primary">der</name>
    <name type="synonym">engA</name>
    <name type="ordered locus">SPT_1647</name>
</gene>
<comment type="function">
    <text evidence="1">GTPase that plays an essential role in the late steps of ribosome biogenesis.</text>
</comment>
<comment type="subunit">
    <text evidence="1">Associates with the 50S ribosomal subunit.</text>
</comment>
<comment type="similarity">
    <text evidence="1">Belongs to the TRAFAC class TrmE-Era-EngA-EngB-Septin-like GTPase superfamily. EngA (Der) GTPase family.</text>
</comment>
<keyword id="KW-0342">GTP-binding</keyword>
<keyword id="KW-0547">Nucleotide-binding</keyword>
<keyword id="KW-0677">Repeat</keyword>
<keyword id="KW-0690">Ribosome biogenesis</keyword>
<sequence length="436" mass="49082">MALPTIAIVGRPNVGKSTLFNRIAGERISIVEDVEGVTRDRIYATGEWLNRSFSMIDTGGIDDVDAPFMEQIKHQAEIAMEEADVIVFVVSGKEGITDADEYVARKLYKTHKPVILAVNKVDNPEMRNDIYDFYALGLGEPLPISSVHGIGTGDVLDAIVENLPNEYEEENPDVIKFSLIGRPNVGKSSLINAILGEDRVIASPVAGTTRDAIDTHFTDTDGQEFTMIDTAGMRKSGKVYENTEKYSVMRAMRAIDRSDVVLMVINAEEGIREYDKRIAGFAHEAGKGMIIVVNKWDTLEKDNHTMKNWEEDIREQFQYLPYAPIIFVSALTKQRLHKLPEMIKQISESQNTRIPSAVLNDVIMDAIAINPTPTDKGKRLKIFYATQVATKPPTFVIFVNEEELMHFSYLRFLENQIRKAFVFEGTPIHLIARKRK</sequence>
<name>DER_STRZT</name>
<reference key="1">
    <citation type="journal article" date="2010" name="Genome Biol.">
        <title>Structure and dynamics of the pan-genome of Streptococcus pneumoniae and closely related species.</title>
        <authorList>
            <person name="Donati C."/>
            <person name="Hiller N.L."/>
            <person name="Tettelin H."/>
            <person name="Muzzi A."/>
            <person name="Croucher N.J."/>
            <person name="Angiuoli S.V."/>
            <person name="Oggioni M."/>
            <person name="Dunning Hotopp J.C."/>
            <person name="Hu F.Z."/>
            <person name="Riley D.R."/>
            <person name="Covacci A."/>
            <person name="Mitchell T.J."/>
            <person name="Bentley S.D."/>
            <person name="Kilian M."/>
            <person name="Ehrlich G.D."/>
            <person name="Rappuoli R."/>
            <person name="Moxon E.R."/>
            <person name="Masignani V."/>
        </authorList>
    </citation>
    <scope>NUCLEOTIDE SEQUENCE [LARGE SCALE GENOMIC DNA]</scope>
    <source>
        <strain>Taiwan19F-14</strain>
    </source>
</reference>
<proteinExistence type="inferred from homology"/>
<accession>C1CSX0</accession>
<organism>
    <name type="scientific">Streptococcus pneumoniae (strain Taiwan19F-14)</name>
    <dbReference type="NCBI Taxonomy" id="487213"/>
    <lineage>
        <taxon>Bacteria</taxon>
        <taxon>Bacillati</taxon>
        <taxon>Bacillota</taxon>
        <taxon>Bacilli</taxon>
        <taxon>Lactobacillales</taxon>
        <taxon>Streptococcaceae</taxon>
        <taxon>Streptococcus</taxon>
    </lineage>
</organism>
<evidence type="ECO:0000255" key="1">
    <source>
        <dbReference type="HAMAP-Rule" id="MF_00195"/>
    </source>
</evidence>
<dbReference type="EMBL" id="CP000921">
    <property type="protein sequence ID" value="ACO23126.1"/>
    <property type="molecule type" value="Genomic_DNA"/>
</dbReference>
<dbReference type="RefSeq" id="WP_001207696.1">
    <property type="nucleotide sequence ID" value="NC_012469.1"/>
</dbReference>
<dbReference type="SMR" id="C1CSX0"/>
<dbReference type="GeneID" id="93740105"/>
<dbReference type="KEGG" id="snt:SPT_1647"/>
<dbReference type="HOGENOM" id="CLU_016077_6_2_9"/>
<dbReference type="GO" id="GO:0005525">
    <property type="term" value="F:GTP binding"/>
    <property type="evidence" value="ECO:0007669"/>
    <property type="project" value="UniProtKB-UniRule"/>
</dbReference>
<dbReference type="GO" id="GO:0043022">
    <property type="term" value="F:ribosome binding"/>
    <property type="evidence" value="ECO:0007669"/>
    <property type="project" value="TreeGrafter"/>
</dbReference>
<dbReference type="GO" id="GO:0042254">
    <property type="term" value="P:ribosome biogenesis"/>
    <property type="evidence" value="ECO:0007669"/>
    <property type="project" value="UniProtKB-KW"/>
</dbReference>
<dbReference type="CDD" id="cd01894">
    <property type="entry name" value="EngA1"/>
    <property type="match status" value="1"/>
</dbReference>
<dbReference type="CDD" id="cd01895">
    <property type="entry name" value="EngA2"/>
    <property type="match status" value="1"/>
</dbReference>
<dbReference type="FunFam" id="3.30.300.20:FF:000004">
    <property type="entry name" value="GTPase Der"/>
    <property type="match status" value="1"/>
</dbReference>
<dbReference type="FunFam" id="3.40.50.300:FF:000040">
    <property type="entry name" value="GTPase Der"/>
    <property type="match status" value="1"/>
</dbReference>
<dbReference type="FunFam" id="3.40.50.300:FF:000057">
    <property type="entry name" value="GTPase Der"/>
    <property type="match status" value="1"/>
</dbReference>
<dbReference type="Gene3D" id="3.30.300.20">
    <property type="match status" value="1"/>
</dbReference>
<dbReference type="Gene3D" id="3.40.50.300">
    <property type="entry name" value="P-loop containing nucleotide triphosphate hydrolases"/>
    <property type="match status" value="2"/>
</dbReference>
<dbReference type="HAMAP" id="MF_00195">
    <property type="entry name" value="GTPase_Der"/>
    <property type="match status" value="1"/>
</dbReference>
<dbReference type="InterPro" id="IPR031166">
    <property type="entry name" value="G_ENGA"/>
</dbReference>
<dbReference type="InterPro" id="IPR006073">
    <property type="entry name" value="GTP-bd"/>
</dbReference>
<dbReference type="InterPro" id="IPR016484">
    <property type="entry name" value="GTPase_Der"/>
</dbReference>
<dbReference type="InterPro" id="IPR032859">
    <property type="entry name" value="KH_dom-like"/>
</dbReference>
<dbReference type="InterPro" id="IPR015946">
    <property type="entry name" value="KH_dom-like_a/b"/>
</dbReference>
<dbReference type="InterPro" id="IPR027417">
    <property type="entry name" value="P-loop_NTPase"/>
</dbReference>
<dbReference type="InterPro" id="IPR005225">
    <property type="entry name" value="Small_GTP-bd"/>
</dbReference>
<dbReference type="NCBIfam" id="TIGR03594">
    <property type="entry name" value="GTPase_EngA"/>
    <property type="match status" value="1"/>
</dbReference>
<dbReference type="NCBIfam" id="TIGR00231">
    <property type="entry name" value="small_GTP"/>
    <property type="match status" value="2"/>
</dbReference>
<dbReference type="PANTHER" id="PTHR43834">
    <property type="entry name" value="GTPASE DER"/>
    <property type="match status" value="1"/>
</dbReference>
<dbReference type="PANTHER" id="PTHR43834:SF6">
    <property type="entry name" value="GTPASE DER"/>
    <property type="match status" value="1"/>
</dbReference>
<dbReference type="Pfam" id="PF14714">
    <property type="entry name" value="KH_dom-like"/>
    <property type="match status" value="1"/>
</dbReference>
<dbReference type="Pfam" id="PF01926">
    <property type="entry name" value="MMR_HSR1"/>
    <property type="match status" value="2"/>
</dbReference>
<dbReference type="PIRSF" id="PIRSF006485">
    <property type="entry name" value="GTP-binding_EngA"/>
    <property type="match status" value="1"/>
</dbReference>
<dbReference type="PRINTS" id="PR00326">
    <property type="entry name" value="GTP1OBG"/>
</dbReference>
<dbReference type="SUPFAM" id="SSF52540">
    <property type="entry name" value="P-loop containing nucleoside triphosphate hydrolases"/>
    <property type="match status" value="2"/>
</dbReference>
<dbReference type="PROSITE" id="PS51712">
    <property type="entry name" value="G_ENGA"/>
    <property type="match status" value="2"/>
</dbReference>